<dbReference type="EC" id="2.4.1.54" evidence="1 2"/>
<dbReference type="EMBL" id="CP001628">
    <property type="protein sequence ID" value="ACS30705.1"/>
    <property type="molecule type" value="Genomic_DNA"/>
</dbReference>
<dbReference type="RefSeq" id="WP_010078652.1">
    <property type="nucleotide sequence ID" value="NC_012803.1"/>
</dbReference>
<dbReference type="SMR" id="C5CBV8"/>
<dbReference type="STRING" id="465515.Mlut_12000"/>
<dbReference type="CAZy" id="GT2">
    <property type="family name" value="Glycosyltransferase Family 2"/>
</dbReference>
<dbReference type="EnsemblBacteria" id="ACS30705">
    <property type="protein sequence ID" value="ACS30705"/>
    <property type="gene ID" value="Mlut_12000"/>
</dbReference>
<dbReference type="GeneID" id="93345357"/>
<dbReference type="KEGG" id="mlu:Mlut_12000"/>
<dbReference type="PATRIC" id="fig|465515.4.peg.1141"/>
<dbReference type="eggNOG" id="COG1216">
    <property type="taxonomic scope" value="Bacteria"/>
</dbReference>
<dbReference type="HOGENOM" id="CLU_033536_13_0_11"/>
<dbReference type="Proteomes" id="UP000000738">
    <property type="component" value="Chromosome"/>
</dbReference>
<dbReference type="GO" id="GO:0016020">
    <property type="term" value="C:membrane"/>
    <property type="evidence" value="ECO:0007669"/>
    <property type="project" value="GOC"/>
</dbReference>
<dbReference type="GO" id="GO:0036427">
    <property type="term" value="F:all-trans-undecaprenyl-phosphate mannosyltransferase activity"/>
    <property type="evidence" value="ECO:0007669"/>
    <property type="project" value="RHEA"/>
</dbReference>
<dbReference type="GO" id="GO:0004582">
    <property type="term" value="F:dolichyl-phosphate beta-D-mannosyltransferase activity"/>
    <property type="evidence" value="ECO:0007669"/>
    <property type="project" value="InterPro"/>
</dbReference>
<dbReference type="GO" id="GO:0009247">
    <property type="term" value="P:glycolipid biosynthetic process"/>
    <property type="evidence" value="ECO:0007669"/>
    <property type="project" value="TreeGrafter"/>
</dbReference>
<dbReference type="CDD" id="cd06442">
    <property type="entry name" value="DPM1_like"/>
    <property type="match status" value="1"/>
</dbReference>
<dbReference type="FunFam" id="3.90.550.10:FF:000122">
    <property type="entry name" value="Dolichol-phosphate mannosyltransferase subunit 1"/>
    <property type="match status" value="1"/>
</dbReference>
<dbReference type="Gene3D" id="3.90.550.10">
    <property type="entry name" value="Spore Coat Polysaccharide Biosynthesis Protein SpsA, Chain A"/>
    <property type="match status" value="1"/>
</dbReference>
<dbReference type="InterPro" id="IPR039528">
    <property type="entry name" value="DPM1-like"/>
</dbReference>
<dbReference type="InterPro" id="IPR001173">
    <property type="entry name" value="Glyco_trans_2-like"/>
</dbReference>
<dbReference type="InterPro" id="IPR029044">
    <property type="entry name" value="Nucleotide-diphossugar_trans"/>
</dbReference>
<dbReference type="PANTHER" id="PTHR43398">
    <property type="entry name" value="DOLICHOL-PHOSPHATE MANNOSYLTRANSFERASE SUBUNIT 1"/>
    <property type="match status" value="1"/>
</dbReference>
<dbReference type="PANTHER" id="PTHR43398:SF1">
    <property type="entry name" value="DOLICHOL-PHOSPHATE MANNOSYLTRANSFERASE SUBUNIT 1"/>
    <property type="match status" value="1"/>
</dbReference>
<dbReference type="Pfam" id="PF00535">
    <property type="entry name" value="Glycos_transf_2"/>
    <property type="match status" value="1"/>
</dbReference>
<dbReference type="SUPFAM" id="SSF53448">
    <property type="entry name" value="Nucleotide-diphospho-sugar transferases"/>
    <property type="match status" value="1"/>
</dbReference>
<sequence>MRVLTIIPTYNEIESLPLTLGRLRDAVPESDVLVVDDASPDGTGDWADTRAAEDPSVHVLHRTTKDGLGGAYIAGFRWGLERGYDVLVEMDADGSHQPEQLPRLLEAVRTADLVIGSRRVPGGKMVNWPTSRKMISWAGSLYPRIMLGLNLTDITAGYRAYRADTLRAIDLDAIESKGYGFQVDMTFRTARLGKRIVEVPITFVERELGESKMSGGIVGEAVVNVTRWGLAARWEGLRARLGL</sequence>
<evidence type="ECO:0000269" key="1">
    <source>
    </source>
</evidence>
<evidence type="ECO:0000269" key="2">
    <source>
    </source>
</evidence>
<evidence type="ECO:0000305" key="3"/>
<evidence type="ECO:0000305" key="4">
    <source>
    </source>
</evidence>
<proteinExistence type="evidence at protein level"/>
<comment type="function">
    <text evidence="1 2 4">Catalyzes the transfer of mannose from GDP-mannose to D-mannosyl-1-phosphoundecaprenol.</text>
</comment>
<comment type="catalytic activity">
    <reaction evidence="1 2">
        <text>di-trans,octa-cis-undecaprenyl phosphate + GDP-alpha-D-mannose = D-mannosyl di-trans,octa-cis-undecaprenyl phosphate + GDP</text>
        <dbReference type="Rhea" id="RHEA:28118"/>
        <dbReference type="ChEBI" id="CHEBI:57527"/>
        <dbReference type="ChEBI" id="CHEBI:58189"/>
        <dbReference type="ChEBI" id="CHEBI:60392"/>
        <dbReference type="ChEBI" id="CHEBI:61761"/>
        <dbReference type="EC" id="2.4.1.54"/>
    </reaction>
</comment>
<comment type="similarity">
    <text evidence="3">Belongs to the glycosyltransferase 2 family.</text>
</comment>
<organism>
    <name type="scientific">Micrococcus luteus (strain ATCC 4698 / DSM 20030 / JCM 1464 / CCM 169 / CCUG 5858 / IAM 1056 / NBRC 3333 / NCIMB 9278 / NCTC 2665 / VKM Ac-2230)</name>
    <name type="common">Micrococcus lysodeikticus</name>
    <dbReference type="NCBI Taxonomy" id="465515"/>
    <lineage>
        <taxon>Bacteria</taxon>
        <taxon>Bacillati</taxon>
        <taxon>Actinomycetota</taxon>
        <taxon>Actinomycetes</taxon>
        <taxon>Micrococcales</taxon>
        <taxon>Micrococcaceae</taxon>
        <taxon>Micrococcus</taxon>
    </lineage>
</organism>
<accession>C5CBV8</accession>
<gene>
    <name type="ordered locus">Mlut_12000</name>
</gene>
<reference key="1">
    <citation type="journal article" date="2010" name="J. Bacteriol.">
        <title>Genome sequence of the Fleming strain of Micrococcus luteus, a simple free-living actinobacterium.</title>
        <authorList>
            <person name="Young M."/>
            <person name="Artsatbanov V."/>
            <person name="Beller H.R."/>
            <person name="Chandra G."/>
            <person name="Chater K.F."/>
            <person name="Dover L.G."/>
            <person name="Goh E.B."/>
            <person name="Kahan T."/>
            <person name="Kaprelyants A.S."/>
            <person name="Kyrpides N."/>
            <person name="Lapidus A."/>
            <person name="Lowry S.R."/>
            <person name="Lykidis A."/>
            <person name="Mahillon J."/>
            <person name="Markowitz V."/>
            <person name="Mavromatis K."/>
            <person name="Mukamolova G.V."/>
            <person name="Oren A."/>
            <person name="Rokem J.S."/>
            <person name="Smith M.C."/>
            <person name="Young D.I."/>
            <person name="Greenblatt C.L."/>
        </authorList>
    </citation>
    <scope>NUCLEOTIDE SEQUENCE [LARGE SCALE GENOMIC DNA]</scope>
    <source>
        <strain>ATCC 4698 / DSM 20030 / JCM 1464 / CCM 169 / CCUG 5858 / IAM 1056 / NBRC 3333 / NCIMB 9278 / NCTC 2665 / VKM Ac-2230</strain>
    </source>
</reference>
<reference key="2">
    <citation type="journal article" date="1969" name="J. Biol. Chem.">
        <title>Studies on the biosynthesis of mannan in Micrococcus lysodeikticus. II. The enzymatic synthesis of mannosyl-l-phosphoryl-undecaprenol.</title>
        <authorList>
            <person name="Lahav M."/>
            <person name="Chiu T.H."/>
            <person name="Lennarz W.J."/>
        </authorList>
    </citation>
    <scope>FUNCTION</scope>
    <scope>CATALYTIC ACTIVITY</scope>
</reference>
<reference key="3">
    <citation type="journal article" date="2006" name="Methods Mol. Biol.">
        <title>Partial purification of mannosylphosphorylundecaprenol synthase from Micrococcus luteus: a useful enzyme for the biosynthesis of a variety of mannosylphosphorylpolyisoprenol products.</title>
        <authorList>
            <person name="Rush J.S."/>
            <person name="Waechter C.J."/>
        </authorList>
    </citation>
    <scope>FUNCTION</scope>
    <scope>CATALYTIC ACTIVITY</scope>
</reference>
<reference key="4">
    <citation type="journal article" date="2013" name="PLoS ONE">
        <title>Rapid identification of sequences for orphan enzymes to power accurate protein annotation.</title>
        <authorList>
            <person name="Ramkissoon K.R."/>
            <person name="Miller J.K."/>
            <person name="Ojha S."/>
            <person name="Watson D.S."/>
            <person name="Bomar M.G."/>
            <person name="Galande A.K."/>
            <person name="Shearer A.G."/>
        </authorList>
    </citation>
    <scope>IDENTIFICATION BY MASS SPECTROMETRY</scope>
    <scope>FUNCTION</scope>
</reference>
<protein>
    <recommendedName>
        <fullName>Undecaprenyl-phosphate mannosyltransferase</fullName>
        <ecNumber evidence="1 2">2.4.1.54</ecNumber>
    </recommendedName>
    <alternativeName>
        <fullName>Mannosylphosphorylundecaprenol synthase</fullName>
        <shortName>MPUS</shortName>
    </alternativeName>
</protein>
<keyword id="KW-0328">Glycosyltransferase</keyword>
<keyword id="KW-1185">Reference proteome</keyword>
<keyword id="KW-0808">Transferase</keyword>
<name>MPUS_MICLC</name>
<feature type="chain" id="PRO_0000425562" description="Undecaprenyl-phosphate mannosyltransferase">
    <location>
        <begin position="1"/>
        <end position="243"/>
    </location>
</feature>